<gene>
    <name type="primary">Ehmt1</name>
    <name type="synonym">Euhmtase1</name>
    <name type="synonym">Glp</name>
    <name type="synonym">Kmt1d</name>
</gene>
<dbReference type="EC" id="2.1.1.-" evidence="6"/>
<dbReference type="EC" id="2.1.1.367" evidence="6"/>
<dbReference type="EMBL" id="AB205007">
    <property type="protein sequence ID" value="BAD90007.1"/>
    <property type="molecule type" value="mRNA"/>
</dbReference>
<dbReference type="EMBL" id="AL732525">
    <property type="protein sequence ID" value="CAM22112.1"/>
    <property type="status" value="ALT_INIT"/>
    <property type="molecule type" value="Genomic_DNA"/>
</dbReference>
<dbReference type="EMBL" id="AL732525">
    <property type="protein sequence ID" value="CAM22113.1"/>
    <property type="molecule type" value="Genomic_DNA"/>
</dbReference>
<dbReference type="EMBL" id="AL732525">
    <property type="protein sequence ID" value="CAM22114.1"/>
    <property type="molecule type" value="Genomic_DNA"/>
</dbReference>
<dbReference type="EMBL" id="BC056938">
    <property type="protein sequence ID" value="AAH56938.1"/>
    <property type="molecule type" value="mRNA"/>
</dbReference>
<dbReference type="EMBL" id="BC089302">
    <property type="protein sequence ID" value="AAH89302.1"/>
    <property type="molecule type" value="mRNA"/>
</dbReference>
<dbReference type="CCDS" id="CCDS15740.1">
    <molecule id="Q5DW34-1"/>
</dbReference>
<dbReference type="CCDS" id="CCDS59634.1">
    <molecule id="Q5DW34-2"/>
</dbReference>
<dbReference type="CCDS" id="CCDS59636.1">
    <molecule id="Q5DW34-3"/>
</dbReference>
<dbReference type="RefSeq" id="NP_001012536.2">
    <molecule id="Q5DW34-1"/>
    <property type="nucleotide sequence ID" value="NM_001012518.3"/>
</dbReference>
<dbReference type="RefSeq" id="NP_001103156.1">
    <molecule id="Q5DW34-2"/>
    <property type="nucleotide sequence ID" value="NM_001109686.2"/>
</dbReference>
<dbReference type="RefSeq" id="NP_001103157.1">
    <molecule id="Q5DW34-3"/>
    <property type="nucleotide sequence ID" value="NM_001109687.2"/>
</dbReference>
<dbReference type="SMR" id="Q5DW34"/>
<dbReference type="BioGRID" id="218847">
    <property type="interactions" value="21"/>
</dbReference>
<dbReference type="DIP" id="DIP-49000N"/>
<dbReference type="DIP" id="DIP-59572N"/>
<dbReference type="FunCoup" id="Q5DW34">
    <property type="interactions" value="5089"/>
</dbReference>
<dbReference type="IntAct" id="Q5DW34">
    <property type="interactions" value="11"/>
</dbReference>
<dbReference type="MINT" id="Q5DW34"/>
<dbReference type="STRING" id="10090.ENSMUSP00000119057"/>
<dbReference type="GlyGen" id="Q5DW34">
    <property type="glycosylation" value="2 sites, 1 O-linked glycan (1 site)"/>
</dbReference>
<dbReference type="iPTMnet" id="Q5DW34"/>
<dbReference type="PhosphoSitePlus" id="Q5DW34"/>
<dbReference type="SwissPalm" id="Q5DW34"/>
<dbReference type="jPOST" id="Q5DW34"/>
<dbReference type="PaxDb" id="10090-ENSMUSP00000100002"/>
<dbReference type="PeptideAtlas" id="Q5DW34"/>
<dbReference type="ProteomicsDB" id="277570">
    <molecule id="Q5DW34-1"/>
</dbReference>
<dbReference type="ProteomicsDB" id="277571">
    <molecule id="Q5DW34-2"/>
</dbReference>
<dbReference type="ProteomicsDB" id="277572">
    <molecule id="Q5DW34-3"/>
</dbReference>
<dbReference type="Pumba" id="Q5DW34"/>
<dbReference type="Antibodypedia" id="32511">
    <property type="antibodies" value="526 antibodies from 31 providers"/>
</dbReference>
<dbReference type="DNASU" id="77683"/>
<dbReference type="Ensembl" id="ENSMUST00000046227.12">
    <molecule id="Q5DW34-3"/>
    <property type="protein sequence ID" value="ENSMUSP00000046077.6"/>
    <property type="gene ID" value="ENSMUSG00000036893.19"/>
</dbReference>
<dbReference type="Ensembl" id="ENSMUST00000114432.9">
    <molecule id="Q5DW34-2"/>
    <property type="protein sequence ID" value="ENSMUSP00000110075.3"/>
    <property type="gene ID" value="ENSMUSG00000036893.19"/>
</dbReference>
<dbReference type="Ensembl" id="ENSMUST00000147147.8">
    <molecule id="Q5DW34-1"/>
    <property type="protein sequence ID" value="ENSMUSP00000119057.3"/>
    <property type="gene ID" value="ENSMUSG00000036893.19"/>
</dbReference>
<dbReference type="GeneID" id="77683"/>
<dbReference type="KEGG" id="mmu:77683"/>
<dbReference type="UCSC" id="uc008iph.4">
    <molecule id="Q5DW34-3"/>
    <property type="organism name" value="mouse"/>
</dbReference>
<dbReference type="UCSC" id="uc008ipi.4">
    <molecule id="Q5DW34-1"/>
    <property type="organism name" value="mouse"/>
</dbReference>
<dbReference type="UCSC" id="uc012brr.3">
    <molecule id="Q5DW34-2"/>
    <property type="organism name" value="mouse"/>
</dbReference>
<dbReference type="AGR" id="MGI:1924933"/>
<dbReference type="CTD" id="79813"/>
<dbReference type="MGI" id="MGI:1924933">
    <property type="gene designation" value="Ehmt1"/>
</dbReference>
<dbReference type="VEuPathDB" id="HostDB:ENSMUSG00000036893"/>
<dbReference type="eggNOG" id="KOG1082">
    <property type="taxonomic scope" value="Eukaryota"/>
</dbReference>
<dbReference type="GeneTree" id="ENSGT00940000156002"/>
<dbReference type="HOGENOM" id="CLU_005790_3_0_1"/>
<dbReference type="InParanoid" id="Q5DW34"/>
<dbReference type="OMA" id="MPKSIMG"/>
<dbReference type="OrthoDB" id="5792673at2759"/>
<dbReference type="PhylomeDB" id="Q5DW34"/>
<dbReference type="TreeFam" id="TF106443"/>
<dbReference type="Reactome" id="R-MMU-2559582">
    <property type="pathway name" value="Senescence-Associated Secretory Phenotype (SASP)"/>
</dbReference>
<dbReference type="Reactome" id="R-MMU-3214841">
    <property type="pathway name" value="PKMTs methylate histone lysines"/>
</dbReference>
<dbReference type="Reactome" id="R-MMU-6804760">
    <property type="pathway name" value="Regulation of TP53 Activity through Methylation"/>
</dbReference>
<dbReference type="Reactome" id="R-MMU-8953750">
    <property type="pathway name" value="Transcriptional Regulation by E2F6"/>
</dbReference>
<dbReference type="BioGRID-ORCS" id="77683">
    <property type="hits" value="20 hits in 86 CRISPR screens"/>
</dbReference>
<dbReference type="ChiTaRS" id="Ehmt1">
    <property type="organism name" value="mouse"/>
</dbReference>
<dbReference type="PRO" id="PR:Q5DW34"/>
<dbReference type="Proteomes" id="UP000000589">
    <property type="component" value="Chromosome 2"/>
</dbReference>
<dbReference type="RNAct" id="Q5DW34">
    <property type="molecule type" value="protein"/>
</dbReference>
<dbReference type="Bgee" id="ENSMUSG00000036893">
    <property type="expression patterns" value="Expressed in manus and 230 other cell types or tissues"/>
</dbReference>
<dbReference type="ExpressionAtlas" id="Q5DW34">
    <property type="expression patterns" value="baseline and differential"/>
</dbReference>
<dbReference type="GO" id="GO:0005694">
    <property type="term" value="C:chromosome"/>
    <property type="evidence" value="ECO:0007669"/>
    <property type="project" value="UniProtKB-SubCell"/>
</dbReference>
<dbReference type="GO" id="GO:0016604">
    <property type="term" value="C:nuclear body"/>
    <property type="evidence" value="ECO:0007669"/>
    <property type="project" value="Ensembl"/>
</dbReference>
<dbReference type="GO" id="GO:0005654">
    <property type="term" value="C:nucleoplasm"/>
    <property type="evidence" value="ECO:0000304"/>
    <property type="project" value="Reactome"/>
</dbReference>
<dbReference type="GO" id="GO:0005634">
    <property type="term" value="C:nucleus"/>
    <property type="evidence" value="ECO:0000314"/>
    <property type="project" value="UniProtKB"/>
</dbReference>
<dbReference type="GO" id="GO:0070742">
    <property type="term" value="F:C2H2 zinc finger domain binding"/>
    <property type="evidence" value="ECO:0000353"/>
    <property type="project" value="UniProtKB"/>
</dbReference>
<dbReference type="GO" id="GO:0046976">
    <property type="term" value="F:histone H3K27 methyltransferase activity"/>
    <property type="evidence" value="ECO:0000314"/>
    <property type="project" value="UniProtKB"/>
</dbReference>
<dbReference type="GO" id="GO:0046974">
    <property type="term" value="F:histone H3K9 methyltransferase activity"/>
    <property type="evidence" value="ECO:0000314"/>
    <property type="project" value="UniProtKB"/>
</dbReference>
<dbReference type="GO" id="GO:0140947">
    <property type="term" value="F:histone H3K9me2 methyltransferase activity"/>
    <property type="evidence" value="ECO:0007669"/>
    <property type="project" value="RHEA"/>
</dbReference>
<dbReference type="GO" id="GO:0002039">
    <property type="term" value="F:p53 binding"/>
    <property type="evidence" value="ECO:0007669"/>
    <property type="project" value="Ensembl"/>
</dbReference>
<dbReference type="GO" id="GO:0016279">
    <property type="term" value="F:protein-lysine N-methyltransferase activity"/>
    <property type="evidence" value="ECO:0000304"/>
    <property type="project" value="Reactome"/>
</dbReference>
<dbReference type="GO" id="GO:0001222">
    <property type="term" value="F:transcription corepressor binding"/>
    <property type="evidence" value="ECO:0007669"/>
    <property type="project" value="Ensembl"/>
</dbReference>
<dbReference type="GO" id="GO:0008270">
    <property type="term" value="F:zinc ion binding"/>
    <property type="evidence" value="ECO:0007669"/>
    <property type="project" value="InterPro"/>
</dbReference>
<dbReference type="GO" id="GO:0006346">
    <property type="term" value="P:DNA methylation-dependent constitutive heterochromatin formation"/>
    <property type="evidence" value="ECO:0000314"/>
    <property type="project" value="UniProtKB"/>
</dbReference>
<dbReference type="GO" id="GO:0140718">
    <property type="term" value="P:facultative heterochromatin formation"/>
    <property type="evidence" value="ECO:0000314"/>
    <property type="project" value="GO_Central"/>
</dbReference>
<dbReference type="GO" id="GO:0045892">
    <property type="term" value="P:negative regulation of DNA-templated transcription"/>
    <property type="evidence" value="ECO:0000315"/>
    <property type="project" value="UniProtKB"/>
</dbReference>
<dbReference type="GO" id="GO:0000122">
    <property type="term" value="P:negative regulation of transcription by RNA polymerase II"/>
    <property type="evidence" value="ECO:0000315"/>
    <property type="project" value="MGI"/>
</dbReference>
<dbReference type="GO" id="GO:0018027">
    <property type="term" value="P:peptidyl-lysine dimethylation"/>
    <property type="evidence" value="ECO:0000315"/>
    <property type="project" value="UniProtKB"/>
</dbReference>
<dbReference type="GO" id="GO:0018026">
    <property type="term" value="P:peptidyl-lysine monomethylation"/>
    <property type="evidence" value="ECO:0000315"/>
    <property type="project" value="UniProtKB"/>
</dbReference>
<dbReference type="GO" id="GO:0120162">
    <property type="term" value="P:positive regulation of cold-induced thermogenesis"/>
    <property type="evidence" value="ECO:0000315"/>
    <property type="project" value="YuBioLab"/>
</dbReference>
<dbReference type="GO" id="GO:0045995">
    <property type="term" value="P:regulation of embryonic development"/>
    <property type="evidence" value="ECO:0000315"/>
    <property type="project" value="UniProtKB"/>
</dbReference>
<dbReference type="GO" id="GO:0060992">
    <property type="term" value="P:response to fungicide"/>
    <property type="evidence" value="ECO:0007669"/>
    <property type="project" value="Ensembl"/>
</dbReference>
<dbReference type="CDD" id="cd20905">
    <property type="entry name" value="EHMT_ZBD"/>
    <property type="match status" value="1"/>
</dbReference>
<dbReference type="CDD" id="cd10535">
    <property type="entry name" value="SET_EHMT1"/>
    <property type="match status" value="1"/>
</dbReference>
<dbReference type="FunFam" id="2.170.270.10:FF:000005">
    <property type="entry name" value="Euchromatic histone-lysine N-methyltransferase 2"/>
    <property type="match status" value="1"/>
</dbReference>
<dbReference type="FunFam" id="1.25.40.20:FF:000029">
    <property type="entry name" value="histone-lysine N-methyltransferase EHMT1 isoform X2"/>
    <property type="match status" value="1"/>
</dbReference>
<dbReference type="Gene3D" id="1.25.40.20">
    <property type="entry name" value="Ankyrin repeat-containing domain"/>
    <property type="match status" value="1"/>
</dbReference>
<dbReference type="Gene3D" id="2.170.270.10">
    <property type="entry name" value="SET domain"/>
    <property type="match status" value="1"/>
</dbReference>
<dbReference type="InterPro" id="IPR002110">
    <property type="entry name" value="Ankyrin_rpt"/>
</dbReference>
<dbReference type="InterPro" id="IPR036770">
    <property type="entry name" value="Ankyrin_rpt-contain_sf"/>
</dbReference>
<dbReference type="InterPro" id="IPR043550">
    <property type="entry name" value="EHMT1/EHMT2"/>
</dbReference>
<dbReference type="InterPro" id="IPR047762">
    <property type="entry name" value="EHMT_CRR"/>
</dbReference>
<dbReference type="InterPro" id="IPR007728">
    <property type="entry name" value="Pre-SET_dom"/>
</dbReference>
<dbReference type="InterPro" id="IPR001214">
    <property type="entry name" value="SET_dom"/>
</dbReference>
<dbReference type="InterPro" id="IPR046341">
    <property type="entry name" value="SET_dom_sf"/>
</dbReference>
<dbReference type="InterPro" id="IPR038035">
    <property type="entry name" value="SET_EHMT1"/>
</dbReference>
<dbReference type="PANTHER" id="PTHR46307">
    <property type="entry name" value="G9A, ISOFORM B"/>
    <property type="match status" value="1"/>
</dbReference>
<dbReference type="PANTHER" id="PTHR46307:SF2">
    <property type="entry name" value="HISTONE-LYSINE N-METHYLTRANSFERASE EHMT1"/>
    <property type="match status" value="1"/>
</dbReference>
<dbReference type="Pfam" id="PF12796">
    <property type="entry name" value="Ank_2"/>
    <property type="match status" value="2"/>
</dbReference>
<dbReference type="Pfam" id="PF13637">
    <property type="entry name" value="Ank_4"/>
    <property type="match status" value="1"/>
</dbReference>
<dbReference type="Pfam" id="PF21533">
    <property type="entry name" value="EHMT1-2_CRR"/>
    <property type="match status" value="1"/>
</dbReference>
<dbReference type="Pfam" id="PF05033">
    <property type="entry name" value="Pre-SET"/>
    <property type="match status" value="1"/>
</dbReference>
<dbReference type="Pfam" id="PF00856">
    <property type="entry name" value="SET"/>
    <property type="match status" value="1"/>
</dbReference>
<dbReference type="PRINTS" id="PR01415">
    <property type="entry name" value="ANKYRIN"/>
</dbReference>
<dbReference type="SMART" id="SM00248">
    <property type="entry name" value="ANK"/>
    <property type="match status" value="7"/>
</dbReference>
<dbReference type="SMART" id="SM00468">
    <property type="entry name" value="PreSET"/>
    <property type="match status" value="1"/>
</dbReference>
<dbReference type="SMART" id="SM00317">
    <property type="entry name" value="SET"/>
    <property type="match status" value="1"/>
</dbReference>
<dbReference type="SUPFAM" id="SSF48403">
    <property type="entry name" value="Ankyrin repeat"/>
    <property type="match status" value="1"/>
</dbReference>
<dbReference type="SUPFAM" id="SSF82199">
    <property type="entry name" value="SET domain"/>
    <property type="match status" value="1"/>
</dbReference>
<dbReference type="PROSITE" id="PS50297">
    <property type="entry name" value="ANK_REP_REGION"/>
    <property type="match status" value="1"/>
</dbReference>
<dbReference type="PROSITE" id="PS50088">
    <property type="entry name" value="ANK_REPEAT"/>
    <property type="match status" value="5"/>
</dbReference>
<dbReference type="PROSITE" id="PS50867">
    <property type="entry name" value="PRE_SET"/>
    <property type="match status" value="1"/>
</dbReference>
<dbReference type="PROSITE" id="PS50280">
    <property type="entry name" value="SET"/>
    <property type="match status" value="1"/>
</dbReference>
<sequence length="1296" mass="141999">MAAADAEQAVLAKQETKQDCCMKTELLREDTPMAADEGSTEKQEGETPMAADGETNGSCEKSGDPSHLNAPKHTQENTRASPQEGTNRVSRVAENGVSERDTEVGKQNHVTADDFMQTSVIGSNGYFLNKPALQGQPLRTPNILTSSLPGHAAKTLPGGASKCRTLSALPQTPTTAPTVPGEGSADTEDRKPTASGTDVRVHRARKTMPKSILGLHAASKDHREVQDHKEPKEDINRNISECGRQQLLPTFPALHQSLPQNQCYMATTKSQTACLPFVLAAAVSRKKKRRMGTYSLVPKKKTKVLKQRTVIEMFKSITHSTVGAKGEKALDDSALHVNGESLEMDSEDEDSDELEDDEDHGAEQAAAFPTEDSRTSKESMSETDRAAKMDGDSEEEQESPDTGEDEDGGDESDLSSESSIKKKFLKRRGKTDSPWIKPARKRRRRSRKKPSSMLGSEACKSSPGSMEQAALGDSAGYMEVSLDSLDLRVRGILSSQTENEGLASGPDVLGTDGLQEVPLCSCRMETPKSREISTLANNQCMATESVDHELGRCTNSVVKYELMRPSNKAPLLVLCEDHRGRMVKHQCCPGCGYFCTAGNFMECQPESSISHRFHKDCASRVNNASYCPHCGEEASKAKEVTIAKADTTSTVTLAPGQEKSLAAEGRADTTTGSIAGAPEDERSQSTAPQAPECFDPAGPAGLVRPTSGLSQGPGKETLESALIALDSEKPKKLRFHPKQLYFSARQGELQKVLLMLVDGIDPNFKMEHQSKRSPLHAAAEAGHVDICHMLVQAGANIDTCSEDQRTPLMEAAENNHLDAVKYLIKAGAQVDPKDAEGSTCLHLAAKKGHYDVVQYLLSNGQMDVNCQDDGGWTPMIWATEYKHVELVKLLLSKGSDINIRDNEENICLHWAAFSGCVDIAEILLAAKCDLHAVNIHGDSPLHIAARENRYDCVVLFLSRDSDVTLKNKEGETPLQCASLSSQVWSALQMSKALRDSAPDKPVAVEKTVSRDIARGYERIPIPCVNAVDSELCPTNYKYVSQNCVTSPMNIDRNITHLQYCVCVDDCSSSTCMCGQLSMRCWYDKDGRLLPEFNMAEPPLIFECNHACSCWRNCRNRVVQNGLRARLQLYRTQDMGWGVRSLQDIPLGTFVCEYVGELISDSEADVREEDSYLFDLDNKDGEVYCIDARFYGNVSRFINHHCEPNLVPVRVFMSHQDLRFPRIAFFSTRLIQAGEQLGFDYGERFWDVKGKLFSCRCGSSKCRHSSAALAQRQASAAQEPQENGLPDTSSAAAADPL</sequence>
<evidence type="ECO:0000250" key="1"/>
<evidence type="ECO:0000250" key="2">
    <source>
        <dbReference type="UniProtKB" id="Q9H9B1"/>
    </source>
</evidence>
<evidence type="ECO:0000255" key="3">
    <source>
        <dbReference type="PROSITE-ProRule" id="PRU00157"/>
    </source>
</evidence>
<evidence type="ECO:0000255" key="4">
    <source>
        <dbReference type="PROSITE-ProRule" id="PRU00190"/>
    </source>
</evidence>
<evidence type="ECO:0000256" key="5">
    <source>
        <dbReference type="SAM" id="MobiDB-lite"/>
    </source>
</evidence>
<evidence type="ECO:0000269" key="6">
    <source>
    </source>
</evidence>
<evidence type="ECO:0000269" key="7">
    <source>
    </source>
</evidence>
<evidence type="ECO:0000269" key="8">
    <source>
    </source>
</evidence>
<evidence type="ECO:0000269" key="9">
    <source>
    </source>
</evidence>
<evidence type="ECO:0000303" key="10">
    <source>
    </source>
</evidence>
<evidence type="ECO:0000305" key="11"/>
<evidence type="ECO:0000305" key="12">
    <source>
    </source>
</evidence>
<keyword id="KW-0007">Acetylation</keyword>
<keyword id="KW-0025">Alternative splicing</keyword>
<keyword id="KW-0040">ANK repeat</keyword>
<keyword id="KW-0156">Chromatin regulator</keyword>
<keyword id="KW-0158">Chromosome</keyword>
<keyword id="KW-1017">Isopeptide bond</keyword>
<keyword id="KW-0479">Metal-binding</keyword>
<keyword id="KW-0489">Methyltransferase</keyword>
<keyword id="KW-0539">Nucleus</keyword>
<keyword id="KW-0597">Phosphoprotein</keyword>
<keyword id="KW-1185">Reference proteome</keyword>
<keyword id="KW-0677">Repeat</keyword>
<keyword id="KW-0949">S-adenosyl-L-methionine</keyword>
<keyword id="KW-0808">Transferase</keyword>
<keyword id="KW-0832">Ubl conjugation</keyword>
<keyword id="KW-0862">Zinc</keyword>
<protein>
    <recommendedName>
        <fullName>Histone-lysine N-methyltransferase EHMT1</fullName>
        <ecNumber evidence="6">2.1.1.-</ecNumber>
        <ecNumber evidence="6">2.1.1.367</ecNumber>
    </recommendedName>
    <alternativeName>
        <fullName>Euchromatic histone-lysine N-methyltransferase 1</fullName>
        <shortName>Eu-HMTase1</shortName>
    </alternativeName>
    <alternativeName>
        <fullName>G9a-like protein 1</fullName>
        <shortName>GLP</shortName>
        <shortName>GLP1</shortName>
    </alternativeName>
    <alternativeName>
        <fullName>Lysine N-methyltransferase 1D</fullName>
    </alternativeName>
</protein>
<proteinExistence type="evidence at protein level"/>
<accession>Q5DW34</accession>
<accession>A2AIS3</accession>
<accession>A2AIS4</accession>
<accession>Q5EBR1</accession>
<accession>Q6PGM0</accession>
<comment type="function">
    <text evidence="6 7 9">Histone methyltransferase that specifically mono- and dimethylates 'Lys-9' of histone H3 (H3K9me1 and H3K9me2, respectively) in euchromatin. H3K9me represents a specific tag for epigenetic transcriptional repression by recruiting HP1 proteins to methylated histones. Also weakly methylates 'Lys-27' of histone H3 (H3K27me). Also required for DNA methylation, the histone methyltransferase activity is not required for DNA methylation, suggesting that these 2 activities function independently. Probably targeted to histone H3 by different DNA-binding proteins like E2F6, MGA, MAX and/or DP1. During G0 phase, it probably contributes to silencing of MYC- and E2F-responsive genes, suggesting a role in G0/G1 transition in cell cycle. In addition to the histone methyltransferase activity, also methylates non-histone proteins: mediates dimethylation of 'Lys-373' of p53/TP53. Represses the expression of mitochondrial function-related genes, perhaps by occupying their promoter regions, working in concert with probable chromatin reader Baz2b (PubMed:32103178).</text>
</comment>
<comment type="catalytic activity">
    <reaction evidence="6">
        <text>N(6)-methyl-L-lysyl(9)-[histone H3] + S-adenosyl-L-methionine = N(6),N(6)-dimethyl-L-lysyl(9)-[histone H3] + S-adenosyl-L-homocysteine + H(+)</text>
        <dbReference type="Rhea" id="RHEA:60284"/>
        <dbReference type="Rhea" id="RHEA-COMP:15541"/>
        <dbReference type="Rhea" id="RHEA-COMP:15542"/>
        <dbReference type="ChEBI" id="CHEBI:15378"/>
        <dbReference type="ChEBI" id="CHEBI:57856"/>
        <dbReference type="ChEBI" id="CHEBI:59789"/>
        <dbReference type="ChEBI" id="CHEBI:61929"/>
        <dbReference type="ChEBI" id="CHEBI:61976"/>
    </reaction>
</comment>
<comment type="catalytic activity">
    <reaction evidence="6">
        <text>L-lysyl(9)-[histone H3] + S-adenosyl-L-methionine = N(6)-methyl-L-lysyl(9)-[histone H3] + S-adenosyl-L-homocysteine + H(+)</text>
        <dbReference type="Rhea" id="RHEA:60280"/>
        <dbReference type="Rhea" id="RHEA-COMP:15542"/>
        <dbReference type="Rhea" id="RHEA-COMP:15546"/>
        <dbReference type="ChEBI" id="CHEBI:15378"/>
        <dbReference type="ChEBI" id="CHEBI:29969"/>
        <dbReference type="ChEBI" id="CHEBI:57856"/>
        <dbReference type="ChEBI" id="CHEBI:59789"/>
        <dbReference type="ChEBI" id="CHEBI:61929"/>
        <dbReference type="EC" id="2.1.1.367"/>
    </reaction>
</comment>
<comment type="activity regulation">
    <text evidence="1">Methyltransferase activity is inhibited by BIX-01294. Efficiently inhibited by compound E72, a BIX-01294 derivative in which the diazepane ring and the benzyl are replaced with a 3-dimethylaminopropyl and a 5-aminopentyl group at sites B and C, respectively (By similarity).</text>
</comment>
<comment type="subunit">
    <text evidence="1 6 8 9">Interacts with WIZ. Part of the E2F6.com-1 complex in G0 phase composed of E2F6, MGA, MAX, TFDP1, CBX3, BAT8, EHMT1, RING1, RNF2, MBLR, L3MBTL2 and YAF2. Interacts with MPHOSPH8 (By similarity). Interacts with CDYL. Interacts with REST only in the presence of CDYL. Part of a complex containing at least CDYL, REST, WIZ, SETB1, EHMT1 and EHMT2 (By similarity). Heterodimer; heterodimerizes with EHMT2. Interacts (via ANK repeats) with RELA (when monomethylated at 'Lys-310'). Interacts with Baz2b (PubMed:32103178).</text>
</comment>
<comment type="interaction">
    <interactant intactId="EBI-16080518">
        <id>Q5DW34-1</id>
    </interactant>
    <interactant intactId="EBI-16080455">
        <id>A2A935-3</id>
        <label>Prdm16</label>
    </interactant>
    <organismsDiffer>false</organismsDiffer>
    <experiments>2</experiments>
</comment>
<comment type="subcellular location">
    <subcellularLocation>
        <location evidence="6">Nucleus</location>
    </subcellularLocation>
    <subcellularLocation>
        <location evidence="6">Chromosome</location>
    </subcellularLocation>
    <text>Associates with euchromatic regions.</text>
</comment>
<comment type="alternative products">
    <event type="alternative splicing"/>
    <isoform>
        <id>Q5DW34-1</id>
        <name>1</name>
        <sequence type="displayed"/>
    </isoform>
    <isoform>
        <id>Q5DW34-2</id>
        <name>2</name>
        <sequence type="described" ref="VSP_040724 VSP_040725"/>
    </isoform>
    <isoform>
        <id>Q5DW34-3</id>
        <name>3</name>
        <sequence type="described" ref="VSP_040726"/>
    </isoform>
</comment>
<comment type="tissue specificity">
    <text evidence="6">Ubiquitous.</text>
</comment>
<comment type="domain">
    <text evidence="1 8">The ANK repeats specifically recognize and bind H3K9me1 and H3K9me2 (By similarity). They also specifically recognize and bind RELA subunit of NF-kappa-B, when RELA is monomethylated at 'Lys-310'.</text>
</comment>
<comment type="domain">
    <text evidence="1">The SET domain mediates interaction with WIZ.</text>
</comment>
<comment type="domain">
    <text evidence="1">In the pre-SET domain, Cys residues bind 3 zinc ions that are arranged in a triangular cluster; some of these Cys residues contribute to the binding of two zinc ions within the cluster.</text>
</comment>
<comment type="disruption phenotype">
    <text evidence="6">Embryos die around E9.5. Levels of H3K9me1 and H3K9me2 are drastically reduced.</text>
</comment>
<comment type="similarity">
    <text evidence="4">Belongs to the class V-like SAM-binding methyltransferase superfamily.</text>
</comment>
<comment type="caution">
    <text evidence="12">Thought to interact with MSX1. However the paper has been retracted over concerns of image tampering.</text>
</comment>
<comment type="sequence caution" evidence="11">
    <conflict type="erroneous initiation">
        <sequence resource="EMBL-CDS" id="CAM22112"/>
    </conflict>
    <text>Truncated N-terminus.</text>
</comment>
<feature type="initiator methionine" description="Removed" evidence="2">
    <location>
        <position position="1"/>
    </location>
</feature>
<feature type="chain" id="PRO_0000405844" description="Histone-lysine N-methyltransferase EHMT1">
    <location>
        <begin position="2"/>
        <end position="1296"/>
    </location>
</feature>
<feature type="repeat" description="ANK 1">
    <location>
        <begin position="735"/>
        <end position="764"/>
    </location>
</feature>
<feature type="repeat" description="ANK 2">
    <location>
        <begin position="770"/>
        <end position="799"/>
    </location>
</feature>
<feature type="repeat" description="ANK 3">
    <location>
        <begin position="803"/>
        <end position="832"/>
    </location>
</feature>
<feature type="repeat" description="ANK 4">
    <location>
        <begin position="836"/>
        <end position="866"/>
    </location>
</feature>
<feature type="repeat" description="ANK 5">
    <location>
        <begin position="870"/>
        <end position="899"/>
    </location>
</feature>
<feature type="repeat" description="ANK 6">
    <location>
        <begin position="903"/>
        <end position="932"/>
    </location>
</feature>
<feature type="repeat" description="ANK 7">
    <location>
        <begin position="936"/>
        <end position="965"/>
    </location>
</feature>
<feature type="repeat" description="ANK 8">
    <location>
        <begin position="969"/>
        <end position="1002"/>
    </location>
</feature>
<feature type="domain" description="Pre-SET" evidence="3">
    <location>
        <begin position="1058"/>
        <end position="1121"/>
    </location>
</feature>
<feature type="domain" description="SET" evidence="4">
    <location>
        <begin position="1124"/>
        <end position="1241"/>
    </location>
</feature>
<feature type="region of interest" description="Disordered" evidence="5">
    <location>
        <begin position="1"/>
        <end position="111"/>
    </location>
</feature>
<feature type="region of interest" description="Disordered" evidence="5">
    <location>
        <begin position="170"/>
        <end position="200"/>
    </location>
</feature>
<feature type="region of interest" description="Disordered" evidence="5">
    <location>
        <begin position="341"/>
        <end position="470"/>
    </location>
</feature>
<feature type="region of interest" description="Disordered" evidence="5">
    <location>
        <begin position="653"/>
        <end position="714"/>
    </location>
</feature>
<feature type="region of interest" description="Histone H3K9me binding" evidence="1">
    <location>
        <begin position="903"/>
        <end position="905"/>
    </location>
</feature>
<feature type="region of interest" description="Interaction with histone H3" evidence="1">
    <location>
        <begin position="1160"/>
        <end position="1179"/>
    </location>
</feature>
<feature type="region of interest" description="Interaction with histone H3" evidence="1">
    <location>
        <begin position="1240"/>
        <end position="1243"/>
    </location>
</feature>
<feature type="region of interest" description="Disordered" evidence="5">
    <location>
        <begin position="1271"/>
        <end position="1296"/>
    </location>
</feature>
<feature type="compositionally biased region" description="Basic and acidic residues" evidence="5">
    <location>
        <begin position="14"/>
        <end position="31"/>
    </location>
</feature>
<feature type="compositionally biased region" description="Polar residues" evidence="5">
    <location>
        <begin position="77"/>
        <end position="89"/>
    </location>
</feature>
<feature type="compositionally biased region" description="Basic and acidic residues" evidence="5">
    <location>
        <begin position="97"/>
        <end position="106"/>
    </location>
</feature>
<feature type="compositionally biased region" description="Acidic residues" evidence="5">
    <location>
        <begin position="342"/>
        <end position="360"/>
    </location>
</feature>
<feature type="compositionally biased region" description="Basic and acidic residues" evidence="5">
    <location>
        <begin position="371"/>
        <end position="391"/>
    </location>
</feature>
<feature type="compositionally biased region" description="Acidic residues" evidence="5">
    <location>
        <begin position="392"/>
        <end position="414"/>
    </location>
</feature>
<feature type="compositionally biased region" description="Basic residues" evidence="5">
    <location>
        <begin position="438"/>
        <end position="450"/>
    </location>
</feature>
<feature type="binding site" evidence="1">
    <location>
        <position position="1060"/>
    </location>
    <ligand>
        <name>Zn(2+)</name>
        <dbReference type="ChEBI" id="CHEBI:29105"/>
        <label>1</label>
    </ligand>
</feature>
<feature type="binding site" evidence="1">
    <location>
        <position position="1060"/>
    </location>
    <ligand>
        <name>Zn(2+)</name>
        <dbReference type="ChEBI" id="CHEBI:29105"/>
        <label>2</label>
    </ligand>
</feature>
<feature type="binding site" evidence="1">
    <location>
        <position position="1062"/>
    </location>
    <ligand>
        <name>Zn(2+)</name>
        <dbReference type="ChEBI" id="CHEBI:29105"/>
        <label>1</label>
    </ligand>
</feature>
<feature type="binding site" evidence="1">
    <location>
        <position position="1066"/>
    </location>
    <ligand>
        <name>Zn(2+)</name>
        <dbReference type="ChEBI" id="CHEBI:29105"/>
        <label>1</label>
    </ligand>
</feature>
<feature type="binding site" evidence="1">
    <location>
        <position position="1066"/>
    </location>
    <ligand>
        <name>Zn(2+)</name>
        <dbReference type="ChEBI" id="CHEBI:29105"/>
        <label>3</label>
    </ligand>
</feature>
<feature type="binding site" evidence="1">
    <location>
        <position position="1071"/>
    </location>
    <ligand>
        <name>Zn(2+)</name>
        <dbReference type="ChEBI" id="CHEBI:29105"/>
        <label>1</label>
    </ligand>
</feature>
<feature type="binding site" evidence="1">
    <location>
        <position position="1073"/>
    </location>
    <ligand>
        <name>Zn(2+)</name>
        <dbReference type="ChEBI" id="CHEBI:29105"/>
        <label>2</label>
    </ligand>
</feature>
<feature type="binding site" evidence="1">
    <location>
        <position position="1103"/>
    </location>
    <ligand>
        <name>Zn(2+)</name>
        <dbReference type="ChEBI" id="CHEBI:29105"/>
        <label>2</label>
    </ligand>
</feature>
<feature type="binding site" evidence="1">
    <location>
        <position position="1103"/>
    </location>
    <ligand>
        <name>Zn(2+)</name>
        <dbReference type="ChEBI" id="CHEBI:29105"/>
        <label>3</label>
    </ligand>
</feature>
<feature type="binding site" evidence="1">
    <location>
        <position position="1107"/>
    </location>
    <ligand>
        <name>Zn(2+)</name>
        <dbReference type="ChEBI" id="CHEBI:29105"/>
        <label>2</label>
    </ligand>
</feature>
<feature type="binding site" evidence="1">
    <location>
        <position position="1109"/>
    </location>
    <ligand>
        <name>Zn(2+)</name>
        <dbReference type="ChEBI" id="CHEBI:29105"/>
        <label>3</label>
    </ligand>
</feature>
<feature type="binding site" evidence="1">
    <location>
        <position position="1113"/>
    </location>
    <ligand>
        <name>Zn(2+)</name>
        <dbReference type="ChEBI" id="CHEBI:29105"/>
        <label>3</label>
    </ligand>
</feature>
<feature type="binding site" evidence="1">
    <location>
        <begin position="1134"/>
        <end position="1136"/>
    </location>
    <ligand>
        <name>S-adenosyl-L-methionine</name>
        <dbReference type="ChEBI" id="CHEBI:59789"/>
    </ligand>
</feature>
<feature type="binding site" evidence="4">
    <location>
        <position position="1171"/>
    </location>
    <ligand>
        <name>S-adenosyl-L-methionine</name>
        <dbReference type="ChEBI" id="CHEBI:59789"/>
    </ligand>
</feature>
<feature type="binding site" evidence="1">
    <location>
        <begin position="1198"/>
        <end position="1199"/>
    </location>
    <ligand>
        <name>S-adenosyl-L-methionine</name>
        <dbReference type="ChEBI" id="CHEBI:59789"/>
    </ligand>
</feature>
<feature type="binding site" evidence="1">
    <location>
        <position position="1201"/>
    </location>
    <ligand>
        <name>Zn(2+)</name>
        <dbReference type="ChEBI" id="CHEBI:29105"/>
        <label>4</label>
    </ligand>
</feature>
<feature type="binding site" evidence="1">
    <location>
        <position position="1254"/>
    </location>
    <ligand>
        <name>Zn(2+)</name>
        <dbReference type="ChEBI" id="CHEBI:29105"/>
        <label>4</label>
    </ligand>
</feature>
<feature type="binding site" evidence="4">
    <location>
        <position position="1255"/>
    </location>
    <ligand>
        <name>S-adenosyl-L-methionine</name>
        <dbReference type="ChEBI" id="CHEBI:59789"/>
    </ligand>
</feature>
<feature type="binding site" evidence="1">
    <location>
        <position position="1256"/>
    </location>
    <ligand>
        <name>Zn(2+)</name>
        <dbReference type="ChEBI" id="CHEBI:29105"/>
        <label>4</label>
    </ligand>
</feature>
<feature type="binding site" evidence="1">
    <location>
        <position position="1261"/>
    </location>
    <ligand>
        <name>Zn(2+)</name>
        <dbReference type="ChEBI" id="CHEBI:29105"/>
        <label>4</label>
    </ligand>
</feature>
<feature type="site" description="Histone H3K9me binding" evidence="1">
    <location>
        <position position="1153"/>
    </location>
</feature>
<feature type="modified residue" description="N-acetylalanine" evidence="2">
    <location>
        <position position="2"/>
    </location>
</feature>
<feature type="modified residue" description="Phosphoserine" evidence="2">
    <location>
        <position position="433"/>
    </location>
</feature>
<feature type="modified residue" description="Phosphoserine" evidence="2">
    <location>
        <position position="481"/>
    </location>
</feature>
<feature type="modified residue" description="Phosphoserine" evidence="2">
    <location>
        <position position="1046"/>
    </location>
</feature>
<feature type="cross-link" description="Glycyl lysine isopeptide (Lys-Gly) (interchain with G-Cter in SUMO1); alternate" evidence="2">
    <location>
        <position position="23"/>
    </location>
</feature>
<feature type="cross-link" description="Glycyl lysine isopeptide (Lys-Gly) (interchain with G-Cter in SUMO2); alternate" evidence="2">
    <location>
        <position position="23"/>
    </location>
</feature>
<feature type="cross-link" description="Glycyl lysine isopeptide (Lys-Gly) (interchain with G-Cter in SUMO2)" evidence="2">
    <location>
        <position position="191"/>
    </location>
</feature>
<feature type="cross-link" description="Glycyl lysine isopeptide (Lys-Gly) (interchain with G-Cter in SUMO2)" evidence="2">
    <location>
        <position position="229"/>
    </location>
</feature>
<feature type="cross-link" description="Glycyl lysine isopeptide (Lys-Gly) (interchain with G-Cter in SUMO2)" evidence="2">
    <location>
        <position position="232"/>
    </location>
</feature>
<feature type="cross-link" description="Glycyl lysine isopeptide (Lys-Gly) (interchain with G-Cter in SUMO2)" evidence="2">
    <location>
        <position position="315"/>
    </location>
</feature>
<feature type="cross-link" description="Glycyl lysine isopeptide (Lys-Gly) (interchain with G-Cter in SUMO2)" evidence="2">
    <location>
        <position position="325"/>
    </location>
</feature>
<feature type="cross-link" description="Glycyl lysine isopeptide (Lys-Gly) (interchain with G-Cter in SUMO2)" evidence="2">
    <location>
        <position position="430"/>
    </location>
</feature>
<feature type="cross-link" description="Glycyl lysine isopeptide (Lys-Gly) (interchain with G-Cter in SUMO2)" evidence="2">
    <location>
        <position position="559"/>
    </location>
</feature>
<feature type="cross-link" description="Glycyl lysine isopeptide (Lys-Gly) (interchain with G-Cter in SUMO2)" evidence="2">
    <location>
        <position position="644"/>
    </location>
</feature>
<feature type="cross-link" description="Glycyl lysine isopeptide (Lys-Gly) (interchain with G-Cter in SUMO2)" evidence="2">
    <location>
        <position position="659"/>
    </location>
</feature>
<feature type="cross-link" description="Glycyl lysine isopeptide (Lys-Gly) (interchain with G-Cter in SUMO2)" evidence="2">
    <location>
        <position position="729"/>
    </location>
</feature>
<feature type="splice variant" id="VSP_040724" description="In isoform 2." evidence="10">
    <location>
        <begin position="273"/>
        <end position="279"/>
    </location>
</feature>
<feature type="splice variant" id="VSP_040725" description="In isoform 2." evidence="10">
    <location>
        <begin position="455"/>
        <end position="500"/>
    </location>
</feature>
<feature type="splice variant" id="VSP_040726" description="In isoform 3." evidence="10">
    <location>
        <begin position="550"/>
        <end position="597"/>
    </location>
</feature>
<feature type="mutagenesis site" description="In LM7; does not prevent methyltransferase activity; when associated with F-1240." evidence="7">
    <original>Y</original>
    <variation>V</variation>
    <location>
        <position position="1153"/>
    </location>
</feature>
<feature type="mutagenesis site" description="In LM3; does not form heterodimer with EHMT2 and is defective in mediating both H3K9me and DNA methylation." evidence="7">
    <location>
        <begin position="1198"/>
        <end position="1201"/>
    </location>
</feature>
<feature type="mutagenesis site" description="In LM4; does not prevent methyltransferase activity." evidence="7">
    <original>C</original>
    <variation>A</variation>
    <location>
        <position position="1201"/>
    </location>
</feature>
<feature type="mutagenesis site" description="In LM7; does not prevent methyltransferase activity; when associated with V-1153." evidence="7">
    <original>Y</original>
    <variation>F</variation>
    <location>
        <position position="1240"/>
    </location>
</feature>
<feature type="sequence conflict" description="In Ref. 1; BAD90007." evidence="11" ref="1">
    <original>E</original>
    <variation>D</variation>
    <location>
        <position position="411"/>
    </location>
</feature>
<reference key="1">
    <citation type="journal article" date="2005" name="Genes Dev.">
        <title>Histone methyltransferases G9a and GLP form heteromeric complexes and are both crucial for methylation of euchromatin at H3-K9.</title>
        <authorList>
            <person name="Tachibana M."/>
            <person name="Ueda J."/>
            <person name="Fukuda M."/>
            <person name="Takeda N."/>
            <person name="Ohta T."/>
            <person name="Iwanari H."/>
            <person name="Sakihama T."/>
            <person name="Kodama T."/>
            <person name="Hamakubo T."/>
            <person name="Shinkai Y."/>
        </authorList>
    </citation>
    <scope>NUCLEOTIDE SEQUENCE [MRNA] (ISOFORM 1)</scope>
    <scope>FUNCTION</scope>
    <scope>CATALYTIC ACTIVITY</scope>
    <scope>SUBCELLULAR LOCATION</scope>
    <scope>DISRUPTION PHENOTYPE</scope>
    <scope>INTERACTION WITH EHMT2</scope>
    <scope>TISSUE SPECIFICITY</scope>
</reference>
<reference key="2">
    <citation type="journal article" date="2009" name="PLoS Biol.">
        <title>Lineage-specific biology revealed by a finished genome assembly of the mouse.</title>
        <authorList>
            <person name="Church D.M."/>
            <person name="Goodstadt L."/>
            <person name="Hillier L.W."/>
            <person name="Zody M.C."/>
            <person name="Goldstein S."/>
            <person name="She X."/>
            <person name="Bult C.J."/>
            <person name="Agarwala R."/>
            <person name="Cherry J.L."/>
            <person name="DiCuccio M."/>
            <person name="Hlavina W."/>
            <person name="Kapustin Y."/>
            <person name="Meric P."/>
            <person name="Maglott D."/>
            <person name="Birtle Z."/>
            <person name="Marques A.C."/>
            <person name="Graves T."/>
            <person name="Zhou S."/>
            <person name="Teague B."/>
            <person name="Potamousis K."/>
            <person name="Churas C."/>
            <person name="Place M."/>
            <person name="Herschleb J."/>
            <person name="Runnheim R."/>
            <person name="Forrest D."/>
            <person name="Amos-Landgraf J."/>
            <person name="Schwartz D.C."/>
            <person name="Cheng Z."/>
            <person name="Lindblad-Toh K."/>
            <person name="Eichler E.E."/>
            <person name="Ponting C.P."/>
        </authorList>
    </citation>
    <scope>NUCLEOTIDE SEQUENCE [LARGE SCALE GENOMIC DNA]</scope>
    <source>
        <strain>C57BL/6J</strain>
    </source>
</reference>
<reference key="3">
    <citation type="journal article" date="2004" name="Genome Res.">
        <title>The status, quality, and expansion of the NIH full-length cDNA project: the Mammalian Gene Collection (MGC).</title>
        <authorList>
            <consortium name="The MGC Project Team"/>
        </authorList>
    </citation>
    <scope>NUCLEOTIDE SEQUENCE [LARGE SCALE MRNA] OF 34-1296 (ISOFORM 2)</scope>
    <scope>NUCLEOTIDE SEQUENCE [LARGE SCALE MRNA] OF 89-1296 (ISOFORM 3)</scope>
    <source>
        <strain>C57BL/6J</strain>
        <tissue>Brain</tissue>
    </source>
</reference>
<reference key="4">
    <citation type="journal article" date="2008" name="EMBO J.">
        <title>G9a/GLP complexes independently mediate H3K9 and DNA methylation to silence transcription.</title>
        <authorList>
            <person name="Tachibana M."/>
            <person name="Matsumura Y."/>
            <person name="Fukuda M."/>
            <person name="Kimura H."/>
            <person name="Shinkai Y."/>
        </authorList>
    </citation>
    <scope>FUNCTION</scope>
    <scope>MUTAGENESIS OF TYR-1153; 1198-ASN--CYS-1201; CYS-1201 AND TYR-1240</scope>
</reference>
<reference key="5">
    <citation type="journal article" date="2011" name="Nat. Immunol.">
        <title>Lysine methylation of the NF-kappaB subunit RelA by SETD6 couples activity of the histone methyltransferase GLP at chromatin to tonic repression of NF-kappaB signaling.</title>
        <authorList>
            <person name="Levy D."/>
            <person name="Kuo A.J."/>
            <person name="Chang Y."/>
            <person name="Schaefer U."/>
            <person name="Kitson C."/>
            <person name="Cheung P."/>
            <person name="Espejo A."/>
            <person name="Zee B.M."/>
            <person name="Liu C.L."/>
            <person name="Tangsombatvisit S."/>
            <person name="Tennen R.I."/>
            <person name="Kuo A.Y."/>
            <person name="Tanjing S."/>
            <person name="Cheung R."/>
            <person name="Chua K.F."/>
            <person name="Utz P.J."/>
            <person name="Shi X."/>
            <person name="Prinjha R.K."/>
            <person name="Lee K."/>
            <person name="Garcia B.A."/>
            <person name="Bedford M.T."/>
            <person name="Tarakhovsky A."/>
            <person name="Cheng X."/>
            <person name="Gozani O."/>
        </authorList>
    </citation>
    <scope>DOMAIN ANK REPEATS</scope>
    <scope>INTERACTION WITH RELA</scope>
</reference>
<reference key="6">
    <citation type="journal article" date="2012" name="PLoS ONE">
        <title>The MSX1 homeoprotein recruits G9a methyltransferase to repressed target genes in myoblast cells.</title>
        <authorList>
            <person name="Wang J."/>
            <person name="Abate-Shen C."/>
        </authorList>
    </citation>
    <scope>RETRACTED PAPER</scope>
</reference>
<reference key="7">
    <citation type="journal article" date="2023" name="PLoS ONE">
        <authorList>
            <consortium name="PLOS ONE Editors"/>
        </authorList>
    </citation>
    <scope>RETRACTION NOTICE OF PUBMED:22629437</scope>
</reference>
<reference evidence="11" key="8">
    <citation type="journal article" date="2020" name="Nature">
        <title>Two conserved epigenetic regulators prevent healthy ageing.</title>
        <authorList>
            <person name="Yuan J."/>
            <person name="Chang S.Y."/>
            <person name="Yin S.G."/>
            <person name="Liu Z.Y."/>
            <person name="Cheng X."/>
            <person name="Liu X.J."/>
            <person name="Jiang Q."/>
            <person name="Gao G."/>
            <person name="Lin D.Y."/>
            <person name="Kang X.L."/>
            <person name="Ye S.W."/>
            <person name="Chen Z."/>
            <person name="Yin J.A."/>
            <person name="Hao P."/>
            <person name="Jiang L."/>
            <person name="Cai S.Q."/>
        </authorList>
    </citation>
    <scope>FUNCTION</scope>
    <scope>INTERACTION WITH BAZ2B</scope>
</reference>
<name>EHMT1_MOUSE</name>
<organism>
    <name type="scientific">Mus musculus</name>
    <name type="common">Mouse</name>
    <dbReference type="NCBI Taxonomy" id="10090"/>
    <lineage>
        <taxon>Eukaryota</taxon>
        <taxon>Metazoa</taxon>
        <taxon>Chordata</taxon>
        <taxon>Craniata</taxon>
        <taxon>Vertebrata</taxon>
        <taxon>Euteleostomi</taxon>
        <taxon>Mammalia</taxon>
        <taxon>Eutheria</taxon>
        <taxon>Euarchontoglires</taxon>
        <taxon>Glires</taxon>
        <taxon>Rodentia</taxon>
        <taxon>Myomorpha</taxon>
        <taxon>Muroidea</taxon>
        <taxon>Muridae</taxon>
        <taxon>Murinae</taxon>
        <taxon>Mus</taxon>
        <taxon>Mus</taxon>
    </lineage>
</organism>